<dbReference type="EMBL" id="AE014613">
    <property type="protein sequence ID" value="AAO68899.1"/>
    <property type="molecule type" value="Genomic_DNA"/>
</dbReference>
<dbReference type="EMBL" id="AL513382">
    <property type="protein sequence ID" value="CAD01988.1"/>
    <property type="molecule type" value="Genomic_DNA"/>
</dbReference>
<dbReference type="RefSeq" id="NP_456148.1">
    <property type="nucleotide sequence ID" value="NC_003198.1"/>
</dbReference>
<dbReference type="SMR" id="Q8XFI1"/>
<dbReference type="STRING" id="220341.gene:17585680"/>
<dbReference type="KEGG" id="stt:t1245"/>
<dbReference type="KEGG" id="sty:STY1745"/>
<dbReference type="PATRIC" id="fig|220341.7.peg.1756"/>
<dbReference type="eggNOG" id="COG4238">
    <property type="taxonomic scope" value="Bacteria"/>
</dbReference>
<dbReference type="HOGENOM" id="CLU_166934_2_1_6"/>
<dbReference type="OMA" id="ANDRIDN"/>
<dbReference type="OrthoDB" id="6567756at2"/>
<dbReference type="Proteomes" id="UP000000541">
    <property type="component" value="Chromosome"/>
</dbReference>
<dbReference type="Proteomes" id="UP000002670">
    <property type="component" value="Chromosome"/>
</dbReference>
<dbReference type="GO" id="GO:0009279">
    <property type="term" value="C:cell outer membrane"/>
    <property type="evidence" value="ECO:0007669"/>
    <property type="project" value="UniProtKB-SubCell"/>
</dbReference>
<dbReference type="GO" id="GO:0005576">
    <property type="term" value="C:extracellular region"/>
    <property type="evidence" value="ECO:0007669"/>
    <property type="project" value="UniProtKB-KW"/>
</dbReference>
<dbReference type="GO" id="GO:0008289">
    <property type="term" value="F:lipid binding"/>
    <property type="evidence" value="ECO:0007669"/>
    <property type="project" value="UniProtKB-UniRule"/>
</dbReference>
<dbReference type="GO" id="GO:0042834">
    <property type="term" value="F:peptidoglycan binding"/>
    <property type="evidence" value="ECO:0007669"/>
    <property type="project" value="UniProtKB-UniRule"/>
</dbReference>
<dbReference type="GO" id="GO:0030258">
    <property type="term" value="P:lipid modification"/>
    <property type="evidence" value="ECO:0007669"/>
    <property type="project" value="UniProtKB-UniRule"/>
</dbReference>
<dbReference type="GO" id="GO:0043580">
    <property type="term" value="P:periplasmic space organization"/>
    <property type="evidence" value="ECO:0007669"/>
    <property type="project" value="UniProtKB-UniRule"/>
</dbReference>
<dbReference type="FunFam" id="1.20.5.190:FF:000002">
    <property type="entry name" value="Major outer membrane lipoprotein"/>
    <property type="match status" value="1"/>
</dbReference>
<dbReference type="Gene3D" id="1.20.5.190">
    <property type="match status" value="1"/>
</dbReference>
<dbReference type="HAMAP" id="MF_00843">
    <property type="entry name" value="Lpp"/>
    <property type="match status" value="1"/>
</dbReference>
<dbReference type="InterPro" id="IPR006817">
    <property type="entry name" value="Lipoprotein_leucine-zipper_dom"/>
</dbReference>
<dbReference type="InterPro" id="IPR016367">
    <property type="entry name" value="MOM_Lpp"/>
</dbReference>
<dbReference type="NCBIfam" id="NF040598">
    <property type="entry name" value="Ala_zip_lipo"/>
    <property type="match status" value="1"/>
</dbReference>
<dbReference type="NCBIfam" id="NF011925">
    <property type="entry name" value="PRK15396.1"/>
    <property type="match status" value="1"/>
</dbReference>
<dbReference type="PANTHER" id="PTHR38763:SF1">
    <property type="entry name" value="MAJOR OUTER MEMBRANE LIPOPROTEIN LPP"/>
    <property type="match status" value="1"/>
</dbReference>
<dbReference type="PANTHER" id="PTHR38763">
    <property type="entry name" value="MAJOR OUTER MEMBRANE PROLIPOPROTEIN LPP"/>
    <property type="match status" value="1"/>
</dbReference>
<dbReference type="Pfam" id="PF04728">
    <property type="entry name" value="LPP"/>
    <property type="match status" value="1"/>
</dbReference>
<dbReference type="PIRSF" id="PIRSF002855">
    <property type="entry name" value="Murein-lipoprotein"/>
    <property type="match status" value="1"/>
</dbReference>
<dbReference type="SUPFAM" id="SSF58042">
    <property type="entry name" value="Outer membrane lipoprotein"/>
    <property type="match status" value="1"/>
</dbReference>
<dbReference type="PROSITE" id="PS51257">
    <property type="entry name" value="PROKAR_LIPOPROTEIN"/>
    <property type="match status" value="1"/>
</dbReference>
<evidence type="ECO:0000250" key="1">
    <source>
        <dbReference type="UniProtKB" id="E8XH70"/>
    </source>
</evidence>
<evidence type="ECO:0000255" key="2">
    <source>
        <dbReference type="HAMAP-Rule" id="MF_00843"/>
    </source>
</evidence>
<evidence type="ECO:0000256" key="3">
    <source>
        <dbReference type="SAM" id="MobiDB-lite"/>
    </source>
</evidence>
<protein>
    <recommendedName>
        <fullName evidence="2">Major outer membrane lipoprotein Lpp 1</fullName>
    </recommendedName>
    <alternativeName>
        <fullName evidence="2">Braun lipoprotein 1</fullName>
        <shortName evidence="2">BLP 1</shortName>
    </alternativeName>
    <alternativeName>
        <fullName evidence="2">Murein lipoprotein 1</fullName>
    </alternativeName>
</protein>
<name>LPP1_SALTI</name>
<sequence length="78" mass="8391">MNRTKLVLGAVILGSTLLAGCSSNAKIDQLSSDVQTLNAKVDQLSNDVNAMRSDVQAAKDDAARANQRLDNQATKYRK</sequence>
<accession>Q8XFI1</accession>
<accession>Q7AMW9</accession>
<feature type="signal peptide" evidence="2">
    <location>
        <begin position="1"/>
        <end position="20"/>
    </location>
</feature>
<feature type="chain" id="PRO_0000018342" description="Major outer membrane lipoprotein Lpp 1" evidence="2">
    <location>
        <begin position="21"/>
        <end position="78"/>
    </location>
</feature>
<feature type="repeat" evidence="2">
    <location>
        <begin position="24"/>
        <end position="34"/>
    </location>
</feature>
<feature type="repeat" evidence="2">
    <location>
        <begin position="38"/>
        <end position="48"/>
    </location>
</feature>
<feature type="region of interest" description="Disordered" evidence="3">
    <location>
        <begin position="56"/>
        <end position="78"/>
    </location>
</feature>
<feature type="coiled-coil region" evidence="2">
    <location>
        <begin position="27"/>
        <end position="75"/>
    </location>
</feature>
<feature type="compositionally biased region" description="Polar residues" evidence="3">
    <location>
        <begin position="68"/>
        <end position="78"/>
    </location>
</feature>
<feature type="modified residue" description="N6-murein peptidoglycan lysine" evidence="2">
    <location>
        <position position="78"/>
    </location>
</feature>
<feature type="lipid moiety-binding region" description="N-palmitoyl cysteine" evidence="2">
    <location>
        <position position="21"/>
    </location>
</feature>
<feature type="lipid moiety-binding region" description="S-diacylglycerol cysteine" evidence="2">
    <location>
        <position position="21"/>
    </location>
</feature>
<keyword id="KW-0998">Cell outer membrane</keyword>
<keyword id="KW-0134">Cell wall</keyword>
<keyword id="KW-0175">Coiled coil</keyword>
<keyword id="KW-0449">Lipoprotein</keyword>
<keyword id="KW-0472">Membrane</keyword>
<keyword id="KW-0564">Palmitate</keyword>
<keyword id="KW-0572">Peptidoglycan-anchor</keyword>
<keyword id="KW-0677">Repeat</keyword>
<keyword id="KW-0964">Secreted</keyword>
<keyword id="KW-0732">Signal</keyword>
<gene>
    <name evidence="2" type="primary">lpp1</name>
    <name type="synonym">lppA</name>
    <name type="ordered locus">STY1745</name>
    <name type="ordered locus">t1245</name>
</gene>
<reference key="1">
    <citation type="journal article" date="2003" name="J. Bacteriol.">
        <title>Comparative genomics of Salmonella enterica serovar Typhi strains Ty2 and CT18.</title>
        <authorList>
            <person name="Deng W."/>
            <person name="Liou S.-R."/>
            <person name="Plunkett G. III"/>
            <person name="Mayhew G.F."/>
            <person name="Rose D.J."/>
            <person name="Burland V."/>
            <person name="Kodoyianni V."/>
            <person name="Schwartz D.C."/>
            <person name="Blattner F.R."/>
        </authorList>
    </citation>
    <scope>NUCLEOTIDE SEQUENCE [LARGE SCALE GENOMIC DNA]</scope>
    <source>
        <strain>ATCC 700931 / Ty2</strain>
    </source>
</reference>
<reference key="2">
    <citation type="journal article" date="2001" name="Nature">
        <title>Complete genome sequence of a multiple drug resistant Salmonella enterica serovar Typhi CT18.</title>
        <authorList>
            <person name="Parkhill J."/>
            <person name="Dougan G."/>
            <person name="James K.D."/>
            <person name="Thomson N.R."/>
            <person name="Pickard D."/>
            <person name="Wain J."/>
            <person name="Churcher C.M."/>
            <person name="Mungall K.L."/>
            <person name="Bentley S.D."/>
            <person name="Holden M.T.G."/>
            <person name="Sebaihia M."/>
            <person name="Baker S."/>
            <person name="Basham D."/>
            <person name="Brooks K."/>
            <person name="Chillingworth T."/>
            <person name="Connerton P."/>
            <person name="Cronin A."/>
            <person name="Davis P."/>
            <person name="Davies R.M."/>
            <person name="Dowd L."/>
            <person name="White N."/>
            <person name="Farrar J."/>
            <person name="Feltwell T."/>
            <person name="Hamlin N."/>
            <person name="Haque A."/>
            <person name="Hien T.T."/>
            <person name="Holroyd S."/>
            <person name="Jagels K."/>
            <person name="Krogh A."/>
            <person name="Larsen T.S."/>
            <person name="Leather S."/>
            <person name="Moule S."/>
            <person name="O'Gaora P."/>
            <person name="Parry C."/>
            <person name="Quail M.A."/>
            <person name="Rutherford K.M."/>
            <person name="Simmonds M."/>
            <person name="Skelton J."/>
            <person name="Stevens K."/>
            <person name="Whitehead S."/>
            <person name="Barrell B.G."/>
        </authorList>
    </citation>
    <scope>NUCLEOTIDE SEQUENCE [LARGE SCALE GENOMIC DNA]</scope>
    <source>
        <strain>CT18</strain>
    </source>
</reference>
<comment type="function">
    <text evidence="2">A highly abundant outer membrane lipoprotein that controls the distance between the inner and outer membranes. The only protein known to be covalently linked to the peptidoglycan network (PGN). Also non-covalently binds the PGN. The link between the cell outer membrane and PGN contributes to maintenance of the structural and functional integrity of the cell envelope, and maintains the correct distance between the PGN and the outer membrane.</text>
</comment>
<comment type="subunit">
    <text evidence="2">Homotrimer.</text>
</comment>
<comment type="subcellular location">
    <subcellularLocation>
        <location evidence="2">Cell outer membrane</location>
        <topology evidence="2">Lipid-anchor</topology>
        <orientation evidence="2">Periplasmic side</orientation>
    </subcellularLocation>
    <subcellularLocation>
        <location evidence="2">Secreted</location>
        <location evidence="2">Cell wall</location>
        <topology evidence="2">Peptidoglycan-anchor</topology>
    </subcellularLocation>
    <text evidence="2">Attached via its lipidated N-terminus to the inner leaflet of the outer membrane. Attached to the peptidoglycan network (PGN) via its C-terminus.</text>
</comment>
<comment type="induction">
    <text evidence="1">This gene is probably the major expressed form.</text>
</comment>
<comment type="similarity">
    <text evidence="2">Belongs to the Lpp family.</text>
</comment>
<organism>
    <name type="scientific">Salmonella typhi</name>
    <dbReference type="NCBI Taxonomy" id="90370"/>
    <lineage>
        <taxon>Bacteria</taxon>
        <taxon>Pseudomonadati</taxon>
        <taxon>Pseudomonadota</taxon>
        <taxon>Gammaproteobacteria</taxon>
        <taxon>Enterobacterales</taxon>
        <taxon>Enterobacteriaceae</taxon>
        <taxon>Salmonella</taxon>
    </lineage>
</organism>
<proteinExistence type="inferred from homology"/>